<keyword id="KW-0227">DNA damage</keyword>
<keyword id="KW-0234">DNA repair</keyword>
<keyword id="KW-0235">DNA replication</keyword>
<keyword id="KW-0436">Ligase</keyword>
<keyword id="KW-0460">Magnesium</keyword>
<keyword id="KW-0464">Manganese</keyword>
<keyword id="KW-0479">Metal-binding</keyword>
<keyword id="KW-0520">NAD</keyword>
<keyword id="KW-1185">Reference proteome</keyword>
<keyword id="KW-0862">Zinc</keyword>
<accession>B4RFE9</accession>
<dbReference type="EC" id="6.5.1.2" evidence="1"/>
<dbReference type="EMBL" id="CP000747">
    <property type="protein sequence ID" value="ACG78719.1"/>
    <property type="molecule type" value="Genomic_DNA"/>
</dbReference>
<dbReference type="RefSeq" id="WP_012522860.1">
    <property type="nucleotide sequence ID" value="NC_011144.1"/>
</dbReference>
<dbReference type="SMR" id="B4RFE9"/>
<dbReference type="STRING" id="450851.PHZ_c2309"/>
<dbReference type="KEGG" id="pzu:PHZ_c2309"/>
<dbReference type="eggNOG" id="COG0272">
    <property type="taxonomic scope" value="Bacteria"/>
</dbReference>
<dbReference type="HOGENOM" id="CLU_007764_2_1_5"/>
<dbReference type="OrthoDB" id="9759736at2"/>
<dbReference type="Proteomes" id="UP000001868">
    <property type="component" value="Chromosome"/>
</dbReference>
<dbReference type="GO" id="GO:0005829">
    <property type="term" value="C:cytosol"/>
    <property type="evidence" value="ECO:0007669"/>
    <property type="project" value="TreeGrafter"/>
</dbReference>
<dbReference type="GO" id="GO:0003911">
    <property type="term" value="F:DNA ligase (NAD+) activity"/>
    <property type="evidence" value="ECO:0007669"/>
    <property type="project" value="UniProtKB-UniRule"/>
</dbReference>
<dbReference type="GO" id="GO:0046872">
    <property type="term" value="F:metal ion binding"/>
    <property type="evidence" value="ECO:0007669"/>
    <property type="project" value="UniProtKB-KW"/>
</dbReference>
<dbReference type="GO" id="GO:0006281">
    <property type="term" value="P:DNA repair"/>
    <property type="evidence" value="ECO:0007669"/>
    <property type="project" value="UniProtKB-KW"/>
</dbReference>
<dbReference type="GO" id="GO:0006260">
    <property type="term" value="P:DNA replication"/>
    <property type="evidence" value="ECO:0007669"/>
    <property type="project" value="UniProtKB-KW"/>
</dbReference>
<dbReference type="CDD" id="cd17748">
    <property type="entry name" value="BRCT_DNA_ligase_like"/>
    <property type="match status" value="1"/>
</dbReference>
<dbReference type="CDD" id="cd00114">
    <property type="entry name" value="LIGANc"/>
    <property type="match status" value="1"/>
</dbReference>
<dbReference type="FunFam" id="1.10.150.20:FF:000007">
    <property type="entry name" value="DNA ligase"/>
    <property type="match status" value="1"/>
</dbReference>
<dbReference type="FunFam" id="2.40.50.140:FF:000012">
    <property type="entry name" value="DNA ligase"/>
    <property type="match status" value="1"/>
</dbReference>
<dbReference type="FunFam" id="3.30.470.30:FF:000001">
    <property type="entry name" value="DNA ligase"/>
    <property type="match status" value="1"/>
</dbReference>
<dbReference type="Gene3D" id="1.10.150.20">
    <property type="entry name" value="5' to 3' exonuclease, C-terminal subdomain"/>
    <property type="match status" value="2"/>
</dbReference>
<dbReference type="Gene3D" id="3.40.50.10190">
    <property type="entry name" value="BRCT domain"/>
    <property type="match status" value="1"/>
</dbReference>
<dbReference type="Gene3D" id="3.30.470.30">
    <property type="entry name" value="DNA ligase/mRNA capping enzyme"/>
    <property type="match status" value="1"/>
</dbReference>
<dbReference type="Gene3D" id="1.10.287.610">
    <property type="entry name" value="Helix hairpin bin"/>
    <property type="match status" value="1"/>
</dbReference>
<dbReference type="Gene3D" id="2.40.50.140">
    <property type="entry name" value="Nucleic acid-binding proteins"/>
    <property type="match status" value="1"/>
</dbReference>
<dbReference type="HAMAP" id="MF_01588">
    <property type="entry name" value="DNA_ligase_A"/>
    <property type="match status" value="1"/>
</dbReference>
<dbReference type="InterPro" id="IPR001357">
    <property type="entry name" value="BRCT_dom"/>
</dbReference>
<dbReference type="InterPro" id="IPR036420">
    <property type="entry name" value="BRCT_dom_sf"/>
</dbReference>
<dbReference type="InterPro" id="IPR041663">
    <property type="entry name" value="DisA/LigA_HHH"/>
</dbReference>
<dbReference type="InterPro" id="IPR001679">
    <property type="entry name" value="DNA_ligase"/>
</dbReference>
<dbReference type="InterPro" id="IPR018239">
    <property type="entry name" value="DNA_ligase_AS"/>
</dbReference>
<dbReference type="InterPro" id="IPR033136">
    <property type="entry name" value="DNA_ligase_CS"/>
</dbReference>
<dbReference type="InterPro" id="IPR013839">
    <property type="entry name" value="DNAligase_adenylation"/>
</dbReference>
<dbReference type="InterPro" id="IPR013840">
    <property type="entry name" value="DNAligase_N"/>
</dbReference>
<dbReference type="InterPro" id="IPR012340">
    <property type="entry name" value="NA-bd_OB-fold"/>
</dbReference>
<dbReference type="InterPro" id="IPR004150">
    <property type="entry name" value="NAD_DNA_ligase_OB"/>
</dbReference>
<dbReference type="InterPro" id="IPR010994">
    <property type="entry name" value="RuvA_2-like"/>
</dbReference>
<dbReference type="NCBIfam" id="TIGR00575">
    <property type="entry name" value="dnlj"/>
    <property type="match status" value="1"/>
</dbReference>
<dbReference type="NCBIfam" id="NF005932">
    <property type="entry name" value="PRK07956.1"/>
    <property type="match status" value="1"/>
</dbReference>
<dbReference type="PANTHER" id="PTHR23389">
    <property type="entry name" value="CHROMOSOME TRANSMISSION FIDELITY FACTOR 18"/>
    <property type="match status" value="1"/>
</dbReference>
<dbReference type="PANTHER" id="PTHR23389:SF9">
    <property type="entry name" value="DNA LIGASE"/>
    <property type="match status" value="1"/>
</dbReference>
<dbReference type="Pfam" id="PF00533">
    <property type="entry name" value="BRCT"/>
    <property type="match status" value="1"/>
</dbReference>
<dbReference type="Pfam" id="PF01653">
    <property type="entry name" value="DNA_ligase_aden"/>
    <property type="match status" value="1"/>
</dbReference>
<dbReference type="Pfam" id="PF03120">
    <property type="entry name" value="DNA_ligase_OB"/>
    <property type="match status" value="1"/>
</dbReference>
<dbReference type="Pfam" id="PF12826">
    <property type="entry name" value="HHH_2"/>
    <property type="match status" value="1"/>
</dbReference>
<dbReference type="PIRSF" id="PIRSF001604">
    <property type="entry name" value="LigA"/>
    <property type="match status" value="1"/>
</dbReference>
<dbReference type="SMART" id="SM00292">
    <property type="entry name" value="BRCT"/>
    <property type="match status" value="1"/>
</dbReference>
<dbReference type="SMART" id="SM00532">
    <property type="entry name" value="LIGANc"/>
    <property type="match status" value="1"/>
</dbReference>
<dbReference type="SUPFAM" id="SSF52113">
    <property type="entry name" value="BRCT domain"/>
    <property type="match status" value="1"/>
</dbReference>
<dbReference type="SUPFAM" id="SSF56091">
    <property type="entry name" value="DNA ligase/mRNA capping enzyme, catalytic domain"/>
    <property type="match status" value="1"/>
</dbReference>
<dbReference type="SUPFAM" id="SSF50249">
    <property type="entry name" value="Nucleic acid-binding proteins"/>
    <property type="match status" value="1"/>
</dbReference>
<dbReference type="SUPFAM" id="SSF47781">
    <property type="entry name" value="RuvA domain 2-like"/>
    <property type="match status" value="1"/>
</dbReference>
<dbReference type="PROSITE" id="PS50172">
    <property type="entry name" value="BRCT"/>
    <property type="match status" value="1"/>
</dbReference>
<dbReference type="PROSITE" id="PS01055">
    <property type="entry name" value="DNA_LIGASE_N1"/>
    <property type="match status" value="1"/>
</dbReference>
<dbReference type="PROSITE" id="PS01056">
    <property type="entry name" value="DNA_LIGASE_N2"/>
    <property type="match status" value="1"/>
</dbReference>
<feature type="chain" id="PRO_0000380439" description="DNA ligase">
    <location>
        <begin position="1"/>
        <end position="692"/>
    </location>
</feature>
<feature type="domain" description="BRCT" evidence="1">
    <location>
        <begin position="614"/>
        <end position="692"/>
    </location>
</feature>
<feature type="active site" description="N6-AMP-lysine intermediate" evidence="1">
    <location>
        <position position="123"/>
    </location>
</feature>
<feature type="binding site" evidence="1">
    <location>
        <begin position="40"/>
        <end position="44"/>
    </location>
    <ligand>
        <name>NAD(+)</name>
        <dbReference type="ChEBI" id="CHEBI:57540"/>
    </ligand>
</feature>
<feature type="binding site" evidence="1">
    <location>
        <begin position="89"/>
        <end position="90"/>
    </location>
    <ligand>
        <name>NAD(+)</name>
        <dbReference type="ChEBI" id="CHEBI:57540"/>
    </ligand>
</feature>
<feature type="binding site" evidence="1">
    <location>
        <position position="121"/>
    </location>
    <ligand>
        <name>NAD(+)</name>
        <dbReference type="ChEBI" id="CHEBI:57540"/>
    </ligand>
</feature>
<feature type="binding site" evidence="1">
    <location>
        <position position="144"/>
    </location>
    <ligand>
        <name>NAD(+)</name>
        <dbReference type="ChEBI" id="CHEBI:57540"/>
    </ligand>
</feature>
<feature type="binding site" evidence="1">
    <location>
        <position position="181"/>
    </location>
    <ligand>
        <name>NAD(+)</name>
        <dbReference type="ChEBI" id="CHEBI:57540"/>
    </ligand>
</feature>
<feature type="binding site" evidence="1">
    <location>
        <position position="297"/>
    </location>
    <ligand>
        <name>NAD(+)</name>
        <dbReference type="ChEBI" id="CHEBI:57540"/>
    </ligand>
</feature>
<feature type="binding site" evidence="1">
    <location>
        <position position="321"/>
    </location>
    <ligand>
        <name>NAD(+)</name>
        <dbReference type="ChEBI" id="CHEBI:57540"/>
    </ligand>
</feature>
<feature type="binding site" evidence="1">
    <location>
        <position position="415"/>
    </location>
    <ligand>
        <name>Zn(2+)</name>
        <dbReference type="ChEBI" id="CHEBI:29105"/>
    </ligand>
</feature>
<feature type="binding site" evidence="1">
    <location>
        <position position="417"/>
    </location>
    <ligand>
        <name>Zn(2+)</name>
        <dbReference type="ChEBI" id="CHEBI:29105"/>
    </ligand>
</feature>
<feature type="binding site" evidence="1">
    <location>
        <position position="439"/>
    </location>
    <ligand>
        <name>Zn(2+)</name>
        <dbReference type="ChEBI" id="CHEBI:29105"/>
    </ligand>
</feature>
<feature type="binding site" evidence="1">
    <location>
        <position position="445"/>
    </location>
    <ligand>
        <name>Zn(2+)</name>
        <dbReference type="ChEBI" id="CHEBI:29105"/>
    </ligand>
</feature>
<name>DNLJ_PHEZH</name>
<reference key="1">
    <citation type="journal article" date="2008" name="BMC Genomics">
        <title>Complete genome of Phenylobacterium zucineum - a novel facultative intracellular bacterium isolated from human erythroleukemia cell line K562.</title>
        <authorList>
            <person name="Luo Y."/>
            <person name="Xu X."/>
            <person name="Ding Z."/>
            <person name="Liu Z."/>
            <person name="Zhang B."/>
            <person name="Yan Z."/>
            <person name="Sun J."/>
            <person name="Hu S."/>
            <person name="Hu X."/>
        </authorList>
    </citation>
    <scope>NUCLEOTIDE SEQUENCE [LARGE SCALE GENOMIC DNA]</scope>
    <source>
        <strain>HLK1</strain>
    </source>
</reference>
<organism>
    <name type="scientific">Phenylobacterium zucineum (strain HLK1)</name>
    <dbReference type="NCBI Taxonomy" id="450851"/>
    <lineage>
        <taxon>Bacteria</taxon>
        <taxon>Pseudomonadati</taxon>
        <taxon>Pseudomonadota</taxon>
        <taxon>Alphaproteobacteria</taxon>
        <taxon>Caulobacterales</taxon>
        <taxon>Caulobacteraceae</taxon>
        <taxon>Phenylobacterium</taxon>
    </lineage>
</organism>
<gene>
    <name evidence="1" type="primary">ligA</name>
    <name type="ordered locus">PHZ_c2309</name>
</gene>
<proteinExistence type="inferred from homology"/>
<comment type="function">
    <text evidence="1">DNA ligase that catalyzes the formation of phosphodiester linkages between 5'-phosphoryl and 3'-hydroxyl groups in double-stranded DNA using NAD as a coenzyme and as the energy source for the reaction. It is essential for DNA replication and repair of damaged DNA.</text>
</comment>
<comment type="catalytic activity">
    <reaction evidence="1">
        <text>NAD(+) + (deoxyribonucleotide)n-3'-hydroxyl + 5'-phospho-(deoxyribonucleotide)m = (deoxyribonucleotide)n+m + AMP + beta-nicotinamide D-nucleotide.</text>
        <dbReference type="EC" id="6.5.1.2"/>
    </reaction>
</comment>
<comment type="cofactor">
    <cofactor evidence="1">
        <name>Mg(2+)</name>
        <dbReference type="ChEBI" id="CHEBI:18420"/>
    </cofactor>
    <cofactor evidence="1">
        <name>Mn(2+)</name>
        <dbReference type="ChEBI" id="CHEBI:29035"/>
    </cofactor>
</comment>
<comment type="similarity">
    <text evidence="1">Belongs to the NAD-dependent DNA ligase family. LigA subfamily.</text>
</comment>
<evidence type="ECO:0000255" key="1">
    <source>
        <dbReference type="HAMAP-Rule" id="MF_01588"/>
    </source>
</evidence>
<protein>
    <recommendedName>
        <fullName evidence="1">DNA ligase</fullName>
        <ecNumber evidence="1">6.5.1.2</ecNumber>
    </recommendedName>
    <alternativeName>
        <fullName evidence="1">Polydeoxyribonucleotide synthase [NAD(+)]</fullName>
    </alternativeName>
</protein>
<sequence>MKSVESLTEAEAAEELTRLADEIAAHDIRYYREDAPTISDAAYDALRRRNDELEAAFPHLIRENSPSLRIGAARAEQFAPVEHGVPMLSLDNAFSDADALEFDARVKRFLRLDEEVAYTAEPKIDGLSCSIRYENGRLVRAATRGDGRVGEDVTANVRTIGEIPQKLHGQAWPEVIEIRGEVYLGHAEFAALNEAAASAGQKTYANPRNAAAGSLRQIDPKITAQRPLRFFAYAWGFVSAPFAQTQWEALQALKAWGFRTTPQSRCVKGAEGLMEAYREMEAERPHLGFDIDGVVYKVDRLEWQQRLGFVSRAPRWGIARKFPAEQARTVLEAIDIQVGRTGALTPVARLTPVTVGGVVVTNATLHNADEIARLDVRVGDTVVLQRAGDVIPQILRVIPEERPKDSVPYDFPHVCPCPLRTEVVRETTASGAETVVRRCSGEFACPFQRINHLLHFVSRRAFDIEGLGEKQLTAFFERGWIKAPADIFRLHEKRDELLAMERMGETSVGNLLANIEARRTIGLDRFIYGLGIRHIGETTATVMARGYGTAAHFLEAMDKVAARDPEAVEELDALDQIGGAVIEAAAAFFGEDHNRAMVEDLAGQLTILDAEKPKTDTAVAGKTVVFTGALERMTRDEAKAQAERLGAKVSGSVSKKTDIVVAGPGAGSKLKTAAELGIQVLTEDEWLEMVGS</sequence>